<proteinExistence type="inferred from homology"/>
<accession>Q2YLX2</accession>
<reference key="1">
    <citation type="journal article" date="2005" name="Infect. Immun.">
        <title>Whole-genome analyses of speciation events in pathogenic Brucellae.</title>
        <authorList>
            <person name="Chain P.S."/>
            <person name="Comerci D.J."/>
            <person name="Tolmasky M.E."/>
            <person name="Larimer F.W."/>
            <person name="Malfatti S.A."/>
            <person name="Vergez L.M."/>
            <person name="Aguero F."/>
            <person name="Land M.L."/>
            <person name="Ugalde R.A."/>
            <person name="Garcia E."/>
        </authorList>
    </citation>
    <scope>NUCLEOTIDE SEQUENCE [LARGE SCALE GENOMIC DNA]</scope>
    <source>
        <strain>2308</strain>
    </source>
</reference>
<dbReference type="EMBL" id="AM040264">
    <property type="protein sequence ID" value="CAJ11721.1"/>
    <property type="molecule type" value="Genomic_DNA"/>
</dbReference>
<dbReference type="RefSeq" id="WP_002964837.1">
    <property type="nucleotide sequence ID" value="NZ_KN046823.1"/>
</dbReference>
<dbReference type="SMR" id="Q2YLX2"/>
<dbReference type="STRING" id="359391.BAB1_1765"/>
<dbReference type="KEGG" id="bmf:BAB1_1765"/>
<dbReference type="PATRIC" id="fig|359391.11.peg.276"/>
<dbReference type="HOGENOM" id="CLU_158651_3_0_5"/>
<dbReference type="Proteomes" id="UP000002719">
    <property type="component" value="Chromosome I"/>
</dbReference>
<dbReference type="GO" id="GO:0003677">
    <property type="term" value="F:DNA binding"/>
    <property type="evidence" value="ECO:0007669"/>
    <property type="project" value="InterPro"/>
</dbReference>
<dbReference type="HAMAP" id="MF_00797">
    <property type="entry name" value="UPF0335"/>
    <property type="match status" value="1"/>
</dbReference>
<dbReference type="InterPro" id="IPR018753">
    <property type="entry name" value="GapR-like"/>
</dbReference>
<dbReference type="InterPro" id="IPR046367">
    <property type="entry name" value="GapR-like_DNA-bd"/>
</dbReference>
<dbReference type="NCBIfam" id="NF010247">
    <property type="entry name" value="PRK13694.1"/>
    <property type="match status" value="1"/>
</dbReference>
<dbReference type="Pfam" id="PF10073">
    <property type="entry name" value="GapR_DNA-bd"/>
    <property type="match status" value="1"/>
</dbReference>
<protein>
    <recommendedName>
        <fullName evidence="1">UPF0335 protein BAB1_1765</fullName>
    </recommendedName>
</protein>
<sequence>MSDDITSEAQTIAVGQLRAFIERIERLEEEKKTIGDDIKEVYAELKGSGFDSKVVRTIIRLRKKEDHERQEEEAMLQLYMDALGMS</sequence>
<name>Y1765_BRUA2</name>
<organism>
    <name type="scientific">Brucella abortus (strain 2308)</name>
    <dbReference type="NCBI Taxonomy" id="359391"/>
    <lineage>
        <taxon>Bacteria</taxon>
        <taxon>Pseudomonadati</taxon>
        <taxon>Pseudomonadota</taxon>
        <taxon>Alphaproteobacteria</taxon>
        <taxon>Hyphomicrobiales</taxon>
        <taxon>Brucellaceae</taxon>
        <taxon>Brucella/Ochrobactrum group</taxon>
        <taxon>Brucella</taxon>
    </lineage>
</organism>
<gene>
    <name type="ordered locus">BAB1_1765</name>
</gene>
<comment type="similarity">
    <text evidence="1">Belongs to the UPF0335 family.</text>
</comment>
<feature type="chain" id="PRO_1000072842" description="UPF0335 protein BAB1_1765">
    <location>
        <begin position="1"/>
        <end position="86"/>
    </location>
</feature>
<evidence type="ECO:0000255" key="1">
    <source>
        <dbReference type="HAMAP-Rule" id="MF_00797"/>
    </source>
</evidence>
<keyword id="KW-1185">Reference proteome</keyword>